<protein>
    <recommendedName>
        <fullName evidence="1">Ribose 1,5-bisphosphate phosphokinase PhnN</fullName>
        <ecNumber evidence="1">2.7.4.23</ecNumber>
    </recommendedName>
    <alternativeName>
        <fullName evidence="1">Ribose 1,5-bisphosphokinase</fullName>
    </alternativeName>
</protein>
<keyword id="KW-0067">ATP-binding</keyword>
<keyword id="KW-0547">Nucleotide-binding</keyword>
<keyword id="KW-0808">Transferase</keyword>
<accession>A6TH13</accession>
<evidence type="ECO:0000255" key="1">
    <source>
        <dbReference type="HAMAP-Rule" id="MF_00836"/>
    </source>
</evidence>
<proteinExistence type="inferred from homology"/>
<organism>
    <name type="scientific">Klebsiella pneumoniae subsp. pneumoniae (strain ATCC 700721 / MGH 78578)</name>
    <dbReference type="NCBI Taxonomy" id="272620"/>
    <lineage>
        <taxon>Bacteria</taxon>
        <taxon>Pseudomonadati</taxon>
        <taxon>Pseudomonadota</taxon>
        <taxon>Gammaproteobacteria</taxon>
        <taxon>Enterobacterales</taxon>
        <taxon>Enterobacteriaceae</taxon>
        <taxon>Klebsiella/Raoultella group</taxon>
        <taxon>Klebsiella</taxon>
        <taxon>Klebsiella pneumoniae complex</taxon>
    </lineage>
</organism>
<comment type="function">
    <text evidence="1">Catalyzes the phosphorylation of ribose 1,5-bisphosphate to 5-phospho-D-ribosyl alpha-1-diphosphate (PRPP).</text>
</comment>
<comment type="catalytic activity">
    <reaction evidence="1">
        <text>alpha-D-ribose 1,5-bisphosphate + ATP = 5-phospho-alpha-D-ribose 1-diphosphate + ADP</text>
        <dbReference type="Rhea" id="RHEA:20109"/>
        <dbReference type="ChEBI" id="CHEBI:30616"/>
        <dbReference type="ChEBI" id="CHEBI:58017"/>
        <dbReference type="ChEBI" id="CHEBI:68688"/>
        <dbReference type="ChEBI" id="CHEBI:456216"/>
        <dbReference type="EC" id="2.7.4.23"/>
    </reaction>
</comment>
<comment type="pathway">
    <text evidence="1">Metabolic intermediate biosynthesis; 5-phospho-alpha-D-ribose 1-diphosphate biosynthesis; 5-phospho-alpha-D-ribose 1-diphosphate from D-ribose 5-phosphate (route II): step 3/3.</text>
</comment>
<comment type="similarity">
    <text evidence="1">Belongs to the ribose 1,5-bisphosphokinase family.</text>
</comment>
<sequence>MPGKLIWLVGPSGSGKDSLLAALRQREHPQLLVAHRYITRPFNAGSENHIALSEHEFFTRAEQHLFALSWHANNTYYGIGVEIDLWLHAGFDVVANGSRAHLALARERYGEVLVPICLAVSPPVLRQRLEQRGRENALEIAQRLDRAARYKPDNCLTLNNDGSLRQSVDEFFRLLRSHAAREADQLV</sequence>
<gene>
    <name evidence="1" type="primary">phnN</name>
    <name type="ordered locus">KPN78578_44230</name>
    <name type="ORF">KPN_04492</name>
</gene>
<reference key="1">
    <citation type="submission" date="2006-09" db="EMBL/GenBank/DDBJ databases">
        <authorList>
            <consortium name="The Klebsiella pneumonia Genome Sequencing Project"/>
            <person name="McClelland M."/>
            <person name="Sanderson E.K."/>
            <person name="Spieth J."/>
            <person name="Clifton W.S."/>
            <person name="Latreille P."/>
            <person name="Sabo A."/>
            <person name="Pepin K."/>
            <person name="Bhonagiri V."/>
            <person name="Porwollik S."/>
            <person name="Ali J."/>
            <person name="Wilson R.K."/>
        </authorList>
    </citation>
    <scope>NUCLEOTIDE SEQUENCE [LARGE SCALE GENOMIC DNA]</scope>
    <source>
        <strain>ATCC 700721 / MGH 78578</strain>
    </source>
</reference>
<feature type="chain" id="PRO_0000412788" description="Ribose 1,5-bisphosphate phosphokinase PhnN">
    <location>
        <begin position="1"/>
        <end position="187"/>
    </location>
</feature>
<feature type="binding site" evidence="1">
    <location>
        <begin position="10"/>
        <end position="17"/>
    </location>
    <ligand>
        <name>ATP</name>
        <dbReference type="ChEBI" id="CHEBI:30616"/>
    </ligand>
</feature>
<dbReference type="EC" id="2.7.4.23" evidence="1"/>
<dbReference type="EMBL" id="CP000647">
    <property type="protein sequence ID" value="ABR79847.1"/>
    <property type="molecule type" value="Genomic_DNA"/>
</dbReference>
<dbReference type="RefSeq" id="WP_015959271.1">
    <property type="nucleotide sequence ID" value="NC_009648.1"/>
</dbReference>
<dbReference type="SMR" id="A6TH13"/>
<dbReference type="STRING" id="272620.KPN_04492"/>
<dbReference type="PaxDb" id="272620-KPN_04492"/>
<dbReference type="EnsemblBacteria" id="ABR79847">
    <property type="protein sequence ID" value="ABR79847"/>
    <property type="gene ID" value="KPN_04492"/>
</dbReference>
<dbReference type="KEGG" id="kpn:KPN_04492"/>
<dbReference type="HOGENOM" id="CLU_102477_0_0_6"/>
<dbReference type="UniPathway" id="UPA00087">
    <property type="reaction ID" value="UER00175"/>
</dbReference>
<dbReference type="Proteomes" id="UP000000265">
    <property type="component" value="Chromosome"/>
</dbReference>
<dbReference type="GO" id="GO:0005524">
    <property type="term" value="F:ATP binding"/>
    <property type="evidence" value="ECO:0007669"/>
    <property type="project" value="UniProtKB-KW"/>
</dbReference>
<dbReference type="GO" id="GO:0033863">
    <property type="term" value="F:ribose 1,5-bisphosphate phosphokinase activity"/>
    <property type="evidence" value="ECO:0007669"/>
    <property type="project" value="UniProtKB-UniRule"/>
</dbReference>
<dbReference type="GO" id="GO:0006015">
    <property type="term" value="P:5-phosphoribose 1-diphosphate biosynthetic process"/>
    <property type="evidence" value="ECO:0007669"/>
    <property type="project" value="UniProtKB-UniRule"/>
</dbReference>
<dbReference type="GO" id="GO:0019634">
    <property type="term" value="P:organic phosphonate metabolic process"/>
    <property type="evidence" value="ECO:0007669"/>
    <property type="project" value="UniProtKB-UniRule"/>
</dbReference>
<dbReference type="FunFam" id="3.40.50.300:FF:000979">
    <property type="entry name" value="Ribose 1,5-bisphosphate phosphokinase PhnN"/>
    <property type="match status" value="1"/>
</dbReference>
<dbReference type="Gene3D" id="3.40.50.300">
    <property type="entry name" value="P-loop containing nucleotide triphosphate hydrolases"/>
    <property type="match status" value="1"/>
</dbReference>
<dbReference type="HAMAP" id="MF_00836">
    <property type="entry name" value="PhnN"/>
    <property type="match status" value="1"/>
</dbReference>
<dbReference type="InterPro" id="IPR008145">
    <property type="entry name" value="GK/Ca_channel_bsu"/>
</dbReference>
<dbReference type="InterPro" id="IPR027417">
    <property type="entry name" value="P-loop_NTPase"/>
</dbReference>
<dbReference type="InterPro" id="IPR012699">
    <property type="entry name" value="PhnN"/>
</dbReference>
<dbReference type="NCBIfam" id="TIGR02322">
    <property type="entry name" value="phosphon_PhnN"/>
    <property type="match status" value="1"/>
</dbReference>
<dbReference type="NCBIfam" id="NF007485">
    <property type="entry name" value="PRK10078.1"/>
    <property type="match status" value="1"/>
</dbReference>
<dbReference type="SMART" id="SM00072">
    <property type="entry name" value="GuKc"/>
    <property type="match status" value="1"/>
</dbReference>
<dbReference type="SUPFAM" id="SSF52540">
    <property type="entry name" value="P-loop containing nucleoside triphosphate hydrolases"/>
    <property type="match status" value="1"/>
</dbReference>
<name>PHNN_KLEP7</name>